<organism>
    <name type="scientific">Aeromonas hydrophila subsp. hydrophila (strain ATCC 7966 / DSM 30187 / BCRC 13018 / CCUG 14551 / JCM 1027 / KCTC 2358 / NCIMB 9240 / NCTC 8049)</name>
    <dbReference type="NCBI Taxonomy" id="380703"/>
    <lineage>
        <taxon>Bacteria</taxon>
        <taxon>Pseudomonadati</taxon>
        <taxon>Pseudomonadota</taxon>
        <taxon>Gammaproteobacteria</taxon>
        <taxon>Aeromonadales</taxon>
        <taxon>Aeromonadaceae</taxon>
        <taxon>Aeromonas</taxon>
    </lineage>
</organism>
<evidence type="ECO:0000255" key="1">
    <source>
        <dbReference type="HAMAP-Rule" id="MF_00272"/>
    </source>
</evidence>
<evidence type="ECO:0000255" key="2">
    <source>
        <dbReference type="PROSITE-ProRule" id="PRU01066"/>
    </source>
</evidence>
<keyword id="KW-0450">Lipoyl</keyword>
<keyword id="KW-1185">Reference proteome</keyword>
<accession>A0KJ04</accession>
<dbReference type="EMBL" id="CP000462">
    <property type="protein sequence ID" value="ABK37969.1"/>
    <property type="molecule type" value="Genomic_DNA"/>
</dbReference>
<dbReference type="RefSeq" id="WP_010634317.1">
    <property type="nucleotide sequence ID" value="NC_008570.1"/>
</dbReference>
<dbReference type="RefSeq" id="YP_856255.1">
    <property type="nucleotide sequence ID" value="NC_008570.1"/>
</dbReference>
<dbReference type="SMR" id="A0KJ04"/>
<dbReference type="STRING" id="380703.AHA_1719"/>
<dbReference type="EnsemblBacteria" id="ABK37969">
    <property type="protein sequence ID" value="ABK37969"/>
    <property type="gene ID" value="AHA_1719"/>
</dbReference>
<dbReference type="GeneID" id="4488171"/>
<dbReference type="KEGG" id="aha:AHA_1719"/>
<dbReference type="PATRIC" id="fig|380703.7.peg.1734"/>
<dbReference type="eggNOG" id="COG0509">
    <property type="taxonomic scope" value="Bacteria"/>
</dbReference>
<dbReference type="HOGENOM" id="CLU_097408_2_0_6"/>
<dbReference type="OrthoDB" id="9796712at2"/>
<dbReference type="Proteomes" id="UP000000756">
    <property type="component" value="Chromosome"/>
</dbReference>
<dbReference type="GO" id="GO:0005829">
    <property type="term" value="C:cytosol"/>
    <property type="evidence" value="ECO:0007669"/>
    <property type="project" value="TreeGrafter"/>
</dbReference>
<dbReference type="GO" id="GO:0005960">
    <property type="term" value="C:glycine cleavage complex"/>
    <property type="evidence" value="ECO:0007669"/>
    <property type="project" value="InterPro"/>
</dbReference>
<dbReference type="GO" id="GO:0019464">
    <property type="term" value="P:glycine decarboxylation via glycine cleavage system"/>
    <property type="evidence" value="ECO:0007669"/>
    <property type="project" value="UniProtKB-UniRule"/>
</dbReference>
<dbReference type="CDD" id="cd06848">
    <property type="entry name" value="GCS_H"/>
    <property type="match status" value="1"/>
</dbReference>
<dbReference type="FunFam" id="2.40.50.100:FF:000011">
    <property type="entry name" value="Glycine cleavage system H protein"/>
    <property type="match status" value="1"/>
</dbReference>
<dbReference type="Gene3D" id="2.40.50.100">
    <property type="match status" value="1"/>
</dbReference>
<dbReference type="HAMAP" id="MF_00272">
    <property type="entry name" value="GcvH"/>
    <property type="match status" value="1"/>
</dbReference>
<dbReference type="InterPro" id="IPR003016">
    <property type="entry name" value="2-oxoA_DH_lipoyl-BS"/>
</dbReference>
<dbReference type="InterPro" id="IPR000089">
    <property type="entry name" value="Biotin_lipoyl"/>
</dbReference>
<dbReference type="InterPro" id="IPR002930">
    <property type="entry name" value="GCV_H"/>
</dbReference>
<dbReference type="InterPro" id="IPR033753">
    <property type="entry name" value="GCV_H/Fam206"/>
</dbReference>
<dbReference type="InterPro" id="IPR017453">
    <property type="entry name" value="GCV_H_sub"/>
</dbReference>
<dbReference type="InterPro" id="IPR011053">
    <property type="entry name" value="Single_hybrid_motif"/>
</dbReference>
<dbReference type="NCBIfam" id="TIGR00527">
    <property type="entry name" value="gcvH"/>
    <property type="match status" value="1"/>
</dbReference>
<dbReference type="NCBIfam" id="NF002270">
    <property type="entry name" value="PRK01202.1"/>
    <property type="match status" value="1"/>
</dbReference>
<dbReference type="PANTHER" id="PTHR11715">
    <property type="entry name" value="GLYCINE CLEAVAGE SYSTEM H PROTEIN"/>
    <property type="match status" value="1"/>
</dbReference>
<dbReference type="PANTHER" id="PTHR11715:SF3">
    <property type="entry name" value="GLYCINE CLEAVAGE SYSTEM H PROTEIN-RELATED"/>
    <property type="match status" value="1"/>
</dbReference>
<dbReference type="Pfam" id="PF01597">
    <property type="entry name" value="GCV_H"/>
    <property type="match status" value="1"/>
</dbReference>
<dbReference type="SUPFAM" id="SSF51230">
    <property type="entry name" value="Single hybrid motif"/>
    <property type="match status" value="1"/>
</dbReference>
<dbReference type="PROSITE" id="PS50968">
    <property type="entry name" value="BIOTINYL_LIPOYL"/>
    <property type="match status" value="1"/>
</dbReference>
<dbReference type="PROSITE" id="PS00189">
    <property type="entry name" value="LIPOYL"/>
    <property type="match status" value="1"/>
</dbReference>
<comment type="function">
    <text evidence="1">The glycine cleavage system catalyzes the degradation of glycine. The H protein shuttles the methylamine group of glycine from the P protein to the T protein.</text>
</comment>
<comment type="cofactor">
    <cofactor evidence="1">
        <name>(R)-lipoate</name>
        <dbReference type="ChEBI" id="CHEBI:83088"/>
    </cofactor>
    <text evidence="1">Binds 1 lipoyl cofactor covalently.</text>
</comment>
<comment type="subunit">
    <text evidence="1">The glycine cleavage system is composed of four proteins: P, T, L and H.</text>
</comment>
<comment type="similarity">
    <text evidence="1">Belongs to the GcvH family.</text>
</comment>
<reference key="1">
    <citation type="journal article" date="2006" name="J. Bacteriol.">
        <title>Genome sequence of Aeromonas hydrophila ATCC 7966T: jack of all trades.</title>
        <authorList>
            <person name="Seshadri R."/>
            <person name="Joseph S.W."/>
            <person name="Chopra A.K."/>
            <person name="Sha J."/>
            <person name="Shaw J."/>
            <person name="Graf J."/>
            <person name="Haft D.H."/>
            <person name="Wu M."/>
            <person name="Ren Q."/>
            <person name="Rosovitz M.J."/>
            <person name="Madupu R."/>
            <person name="Tallon L."/>
            <person name="Kim M."/>
            <person name="Jin S."/>
            <person name="Vuong H."/>
            <person name="Stine O.C."/>
            <person name="Ali A."/>
            <person name="Horneman A.J."/>
            <person name="Heidelberg J.F."/>
        </authorList>
    </citation>
    <scope>NUCLEOTIDE SEQUENCE [LARGE SCALE GENOMIC DNA]</scope>
    <source>
        <strain>ATCC 7966 / DSM 30187 / BCRC 13018 / CCUG 14551 / JCM 1027 / KCTC 2358 / NCIMB 9240 / NCTC 8049</strain>
    </source>
</reference>
<gene>
    <name evidence="1" type="primary">gcvH</name>
    <name type="ordered locus">AHA_1719</name>
</gene>
<feature type="chain" id="PRO_0000302341" description="Glycine cleavage system H protein">
    <location>
        <begin position="1"/>
        <end position="129"/>
    </location>
</feature>
<feature type="domain" description="Lipoyl-binding" evidence="2">
    <location>
        <begin position="24"/>
        <end position="106"/>
    </location>
</feature>
<feature type="modified residue" description="N6-lipoyllysine" evidence="1">
    <location>
        <position position="65"/>
    </location>
</feature>
<protein>
    <recommendedName>
        <fullName evidence="1">Glycine cleavage system H protein</fullName>
    </recommendedName>
</protein>
<proteinExistence type="inferred from homology"/>
<sequence>MSHIPSELKYATSHEWIRVEANGEAVVGITEHAQELLGDMVFVDLPEVGKQVGAGDDCAVAESVKAASDIYSPVSGEILAVNEELEGSPELVNSDPYGAGWLFRIKLDDAGELANLLDAEGYQNVVDEE</sequence>
<name>GCSH_AERHH</name>